<evidence type="ECO:0000250" key="1"/>
<evidence type="ECO:0000255" key="2">
    <source>
        <dbReference type="PROSITE-ProRule" id="PRU00441"/>
    </source>
</evidence>
<evidence type="ECO:0000305" key="3"/>
<proteinExistence type="inferred from homology"/>
<sequence length="288" mass="32564">MIPLFFIPPFIILFITKGKFRFLTKFELVLACALHYGTFILALPIFFLLYKTKQQPWNILLQTALEPVVLSAYGFTFLTALLATIINAIFGLILAWVLVRYEFPGKKLLDATVDLPFALPTSVGGLTLMTVFNDKGWIKPICSWLNIKIVFNPIGVLLAMIFVSLPFVVRTIQPVLQNMEEDLEEAAWCLGASPWTTFWHILFPPLTPSLLTGTTLGFSRALGEYGSIVLIASNIPMKDLVISVLLFQKLEQYDYKSATIIASFVLIISFTALFFINKIQLWKKTFHK</sequence>
<feature type="chain" id="PRO_0000059995" description="Probable sulfate transport system permease protein cysT">
    <location>
        <begin position="1"/>
        <end position="288"/>
    </location>
</feature>
<feature type="transmembrane region" description="Helical" evidence="2">
    <location>
        <begin position="2"/>
        <end position="22"/>
    </location>
</feature>
<feature type="transmembrane region" description="Helical" evidence="2">
    <location>
        <begin position="28"/>
        <end position="48"/>
    </location>
</feature>
<feature type="transmembrane region" description="Helical" evidence="2">
    <location>
        <begin position="77"/>
        <end position="97"/>
    </location>
</feature>
<feature type="transmembrane region" description="Helical" evidence="2">
    <location>
        <begin position="112"/>
        <end position="132"/>
    </location>
</feature>
<feature type="transmembrane region" description="Helical" evidence="2">
    <location>
        <begin position="149"/>
        <end position="169"/>
    </location>
</feature>
<feature type="transmembrane region" description="Helical" evidence="2">
    <location>
        <begin position="196"/>
        <end position="218"/>
    </location>
</feature>
<feature type="transmembrane region" description="Helical" evidence="2">
    <location>
        <begin position="227"/>
        <end position="247"/>
    </location>
</feature>
<feature type="transmembrane region" description="Helical" evidence="2">
    <location>
        <begin position="257"/>
        <end position="277"/>
    </location>
</feature>
<feature type="domain" description="ABC transmembrane type-1" evidence="2">
    <location>
        <begin position="73"/>
        <end position="277"/>
    </location>
</feature>
<organism>
    <name type="scientific">Marchantia polymorpha</name>
    <name type="common">Common liverwort</name>
    <name type="synonym">Marchantia aquatica</name>
    <dbReference type="NCBI Taxonomy" id="3197"/>
    <lineage>
        <taxon>Eukaryota</taxon>
        <taxon>Viridiplantae</taxon>
        <taxon>Streptophyta</taxon>
        <taxon>Embryophyta</taxon>
        <taxon>Marchantiophyta</taxon>
        <taxon>Marchantiopsida</taxon>
        <taxon>Marchantiidae</taxon>
        <taxon>Marchantiales</taxon>
        <taxon>Marchantiaceae</taxon>
        <taxon>Marchantia</taxon>
    </lineage>
</organism>
<geneLocation type="chloroplast"/>
<reference key="1">
    <citation type="journal article" date="1988" name="J. Mol. Biol.">
        <title>Structure and organization of Marchantia polymorpha chloroplast genome. IV. Inverted repeat and small single copy regions.</title>
        <authorList>
            <person name="Kohchi T."/>
            <person name="Shirai H."/>
            <person name="Fukuzawa H."/>
            <person name="Sano T."/>
            <person name="Komano T."/>
            <person name="Umesono K."/>
            <person name="Inokuchi H."/>
            <person name="Ozeki H."/>
            <person name="Ohyama K."/>
        </authorList>
    </citation>
    <scope>NUCLEOTIDE SEQUENCE [GENOMIC DNA]</scope>
</reference>
<reference key="2">
    <citation type="journal article" date="1986" name="Nature">
        <title>Chloroplast gene organization deduced from complete sequence of liverwort Marchantia polymorpha chloroplast DNA.</title>
        <authorList>
            <person name="Ohyama K."/>
            <person name="Fukuzawa H."/>
            <person name="Kohchi T."/>
            <person name="Shirai H."/>
            <person name="Sano T."/>
            <person name="Sano S."/>
            <person name="Umesono K."/>
            <person name="Shiki Y."/>
            <person name="Takeuchi M."/>
            <person name="Chang Z."/>
            <person name="Aota S."/>
            <person name="Inokuchi H."/>
            <person name="Ozeki H."/>
        </authorList>
    </citation>
    <scope>NUCLEOTIDE SEQUENCE [LARGE SCALE GENOMIC DNA]</scope>
</reference>
<keyword id="KW-0150">Chloroplast</keyword>
<keyword id="KW-0472">Membrane</keyword>
<keyword id="KW-0934">Plastid</keyword>
<keyword id="KW-0764">Sulfate transport</keyword>
<keyword id="KW-0812">Transmembrane</keyword>
<keyword id="KW-1133">Transmembrane helix</keyword>
<keyword id="KW-0813">Transport</keyword>
<protein>
    <recommendedName>
        <fullName>Probable sulfate transport system permease protein cysT</fullName>
    </recommendedName>
</protein>
<accession>P26246</accession>
<name>CYST_MARPO</name>
<gene>
    <name type="primary">cysT</name>
    <name type="synonym">mbpY</name>
</gene>
<dbReference type="EMBL" id="X04465">
    <property type="protein sequence ID" value="CAA28132.1"/>
    <property type="molecule type" value="Genomic_DNA"/>
</dbReference>
<dbReference type="PIR" id="A05062">
    <property type="entry name" value="A05062"/>
</dbReference>
<dbReference type="RefSeq" id="NP_039346.1">
    <property type="nucleotide sequence ID" value="NC_001319.1"/>
</dbReference>
<dbReference type="SMR" id="P26246"/>
<dbReference type="TCDB" id="3.A.1.6.12">
    <property type="family name" value="the atp-binding cassette (abc) superfamily"/>
</dbReference>
<dbReference type="GeneID" id="2702613"/>
<dbReference type="GO" id="GO:0031969">
    <property type="term" value="C:chloroplast membrane"/>
    <property type="evidence" value="ECO:0007669"/>
    <property type="project" value="UniProtKB-SubCell"/>
</dbReference>
<dbReference type="GO" id="GO:0005886">
    <property type="term" value="C:plasma membrane"/>
    <property type="evidence" value="ECO:0007669"/>
    <property type="project" value="InterPro"/>
</dbReference>
<dbReference type="GO" id="GO:0015419">
    <property type="term" value="F:ABC-type sulfate transporter activity"/>
    <property type="evidence" value="ECO:0007669"/>
    <property type="project" value="InterPro"/>
</dbReference>
<dbReference type="CDD" id="cd06261">
    <property type="entry name" value="TM_PBP2"/>
    <property type="match status" value="1"/>
</dbReference>
<dbReference type="FunFam" id="1.10.3720.10:FF:000004">
    <property type="entry name" value="Sulfate transport system permease protein CysT"/>
    <property type="match status" value="1"/>
</dbReference>
<dbReference type="Gene3D" id="1.10.3720.10">
    <property type="entry name" value="MetI-like"/>
    <property type="match status" value="1"/>
</dbReference>
<dbReference type="InterPro" id="IPR011865">
    <property type="entry name" value="CysT_permease"/>
</dbReference>
<dbReference type="InterPro" id="IPR000515">
    <property type="entry name" value="MetI-like"/>
</dbReference>
<dbReference type="InterPro" id="IPR035906">
    <property type="entry name" value="MetI-like_sf"/>
</dbReference>
<dbReference type="InterPro" id="IPR005667">
    <property type="entry name" value="Sulph_transpt2"/>
</dbReference>
<dbReference type="NCBIfam" id="TIGR00969">
    <property type="entry name" value="3a0106s02"/>
    <property type="match status" value="1"/>
</dbReference>
<dbReference type="NCBIfam" id="TIGR02139">
    <property type="entry name" value="permease_CysT"/>
    <property type="match status" value="1"/>
</dbReference>
<dbReference type="PANTHER" id="PTHR30406">
    <property type="entry name" value="SULFATE TRANSPORT SYSTEM PERMEASE PROTEIN"/>
    <property type="match status" value="1"/>
</dbReference>
<dbReference type="PANTHER" id="PTHR30406:SF8">
    <property type="entry name" value="SULFATE TRANSPORT SYSTEM PERMEASE PROTEIN CYST"/>
    <property type="match status" value="1"/>
</dbReference>
<dbReference type="Pfam" id="PF00528">
    <property type="entry name" value="BPD_transp_1"/>
    <property type="match status" value="1"/>
</dbReference>
<dbReference type="SUPFAM" id="SSF161098">
    <property type="entry name" value="MetI-like"/>
    <property type="match status" value="1"/>
</dbReference>
<dbReference type="PROSITE" id="PS50928">
    <property type="entry name" value="ABC_TM1"/>
    <property type="match status" value="1"/>
</dbReference>
<comment type="function">
    <text evidence="1">Part of the ABC transporter complex cysAWTP (TC 3.A.1.6.1) involved in sulfate/thiosulfate import. Probably responsible for the translocation of the substrate across the membrane (By similarity).</text>
</comment>
<comment type="subcellular location">
    <subcellularLocation>
        <location evidence="3">Plastid</location>
        <location evidence="3">Chloroplast membrane</location>
        <topology evidence="3">Multi-pass membrane protein</topology>
    </subcellularLocation>
</comment>
<comment type="similarity">
    <text evidence="3">Belongs to the binding-protein-dependent transport system permease family. CysTW subfamily.</text>
</comment>